<proteinExistence type="inferred from homology"/>
<reference key="1">
    <citation type="journal article" date="2008" name="Proc. Natl. Acad. Sci. U.S.A.">
        <title>Nitrogen fixation island and rhizosphere competence traits in the genome of root-associated Pseudomonas stutzeri A1501.</title>
        <authorList>
            <person name="Yan Y."/>
            <person name="Yang J."/>
            <person name="Dou Y."/>
            <person name="Chen M."/>
            <person name="Ping S."/>
            <person name="Peng J."/>
            <person name="Lu W."/>
            <person name="Zhang W."/>
            <person name="Yao Z."/>
            <person name="Li H."/>
            <person name="Liu W."/>
            <person name="He S."/>
            <person name="Geng L."/>
            <person name="Zhang X."/>
            <person name="Yang F."/>
            <person name="Yu H."/>
            <person name="Zhan Y."/>
            <person name="Li D."/>
            <person name="Lin Z."/>
            <person name="Wang Y."/>
            <person name="Elmerich C."/>
            <person name="Lin M."/>
            <person name="Jin Q."/>
        </authorList>
    </citation>
    <scope>NUCLEOTIDE SEQUENCE [LARGE SCALE GENOMIC DNA]</scope>
    <source>
        <strain>A1501</strain>
    </source>
</reference>
<evidence type="ECO:0000255" key="1">
    <source>
        <dbReference type="HAMAP-Rule" id="MF_00277"/>
    </source>
</evidence>
<evidence type="ECO:0000255" key="2">
    <source>
        <dbReference type="PROSITE-ProRule" id="PRU01175"/>
    </source>
</evidence>
<name>GLND_STUS1</name>
<comment type="function">
    <text evidence="1">Modifies, by uridylylation and deuridylylation, the PII regulatory proteins (GlnB and homologs), in response to the nitrogen status of the cell that GlnD senses through the glutamine level. Under low glutamine levels, catalyzes the conversion of the PII proteins and UTP to PII-UMP and PPi, while under higher glutamine levels, GlnD hydrolyzes PII-UMP to PII and UMP (deuridylylation). Thus, controls uridylylation state and activity of the PII proteins, and plays an important role in the regulation of nitrogen fixation and metabolism.</text>
</comment>
<comment type="catalytic activity">
    <reaction evidence="1">
        <text>[protein-PII]-L-tyrosine + UTP = [protein-PII]-uridylyl-L-tyrosine + diphosphate</text>
        <dbReference type="Rhea" id="RHEA:13673"/>
        <dbReference type="Rhea" id="RHEA-COMP:12147"/>
        <dbReference type="Rhea" id="RHEA-COMP:12148"/>
        <dbReference type="ChEBI" id="CHEBI:33019"/>
        <dbReference type="ChEBI" id="CHEBI:46398"/>
        <dbReference type="ChEBI" id="CHEBI:46858"/>
        <dbReference type="ChEBI" id="CHEBI:90602"/>
        <dbReference type="EC" id="2.7.7.59"/>
    </reaction>
</comment>
<comment type="catalytic activity">
    <reaction evidence="1">
        <text>[protein-PII]-uridylyl-L-tyrosine + H2O = [protein-PII]-L-tyrosine + UMP + H(+)</text>
        <dbReference type="Rhea" id="RHEA:48600"/>
        <dbReference type="Rhea" id="RHEA-COMP:12147"/>
        <dbReference type="Rhea" id="RHEA-COMP:12148"/>
        <dbReference type="ChEBI" id="CHEBI:15377"/>
        <dbReference type="ChEBI" id="CHEBI:15378"/>
        <dbReference type="ChEBI" id="CHEBI:46858"/>
        <dbReference type="ChEBI" id="CHEBI:57865"/>
        <dbReference type="ChEBI" id="CHEBI:90602"/>
    </reaction>
</comment>
<comment type="cofactor">
    <cofactor evidence="1">
        <name>Mg(2+)</name>
        <dbReference type="ChEBI" id="CHEBI:18420"/>
    </cofactor>
</comment>
<comment type="activity regulation">
    <text evidence="1">Uridylyltransferase (UTase) activity is inhibited by glutamine, while glutamine activates uridylyl-removing (UR) activity.</text>
</comment>
<comment type="domain">
    <text evidence="1">Has four distinct domains: an N-terminal nucleotidyltransferase (NT) domain responsible for UTase activity, a central HD domain that encodes UR activity, and two C-terminal ACT domains that seem to have a role in glutamine sensing.</text>
</comment>
<comment type="similarity">
    <text evidence="1">Belongs to the GlnD family.</text>
</comment>
<accession>A4VJR9</accession>
<keyword id="KW-0378">Hydrolase</keyword>
<keyword id="KW-0460">Magnesium</keyword>
<keyword id="KW-0511">Multifunctional enzyme</keyword>
<keyword id="KW-0535">Nitrogen fixation</keyword>
<keyword id="KW-0548">Nucleotidyltransferase</keyword>
<keyword id="KW-1185">Reference proteome</keyword>
<keyword id="KW-0677">Repeat</keyword>
<keyword id="KW-0808">Transferase</keyword>
<protein>
    <recommendedName>
        <fullName evidence="1">Bifunctional uridylyltransferase/uridylyl-removing enzyme</fullName>
        <shortName evidence="1">UTase/UR</shortName>
    </recommendedName>
    <alternativeName>
        <fullName evidence="1">Bifunctional [protein-PII] modification enzyme</fullName>
    </alternativeName>
    <alternativeName>
        <fullName evidence="1">Bifunctional nitrogen sensor protein</fullName>
    </alternativeName>
    <domain>
        <recommendedName>
            <fullName evidence="1">[Protein-PII] uridylyltransferase</fullName>
            <shortName evidence="1">PII uridylyltransferase</shortName>
            <shortName evidence="1">UTase</shortName>
            <ecNumber evidence="1">2.7.7.59</ecNumber>
        </recommendedName>
    </domain>
    <domain>
        <recommendedName>
            <fullName evidence="1">[Protein-PII]-UMP uridylyl-removing enzyme</fullName>
            <shortName evidence="1">UR</shortName>
            <ecNumber evidence="1">3.1.4.-</ecNumber>
        </recommendedName>
    </domain>
</protein>
<feature type="chain" id="PRO_1000078809" description="Bifunctional uridylyltransferase/uridylyl-removing enzyme">
    <location>
        <begin position="1"/>
        <end position="900"/>
    </location>
</feature>
<feature type="domain" description="HD" evidence="2">
    <location>
        <begin position="461"/>
        <end position="583"/>
    </location>
</feature>
<feature type="domain" description="ACT 1" evidence="1">
    <location>
        <begin position="706"/>
        <end position="789"/>
    </location>
</feature>
<feature type="domain" description="ACT 2" evidence="1">
    <location>
        <begin position="816"/>
        <end position="896"/>
    </location>
</feature>
<feature type="region of interest" description="Uridylyltransferase">
    <location>
        <begin position="1"/>
        <end position="342"/>
    </location>
</feature>
<feature type="region of interest" description="Uridylyl-removing">
    <location>
        <begin position="343"/>
        <end position="705"/>
    </location>
</feature>
<gene>
    <name evidence="1" type="primary">glnD</name>
    <name type="ordered locus">PST_1535</name>
</gene>
<organism>
    <name type="scientific">Stutzerimonas stutzeri (strain A1501)</name>
    <name type="common">Pseudomonas stutzeri</name>
    <dbReference type="NCBI Taxonomy" id="379731"/>
    <lineage>
        <taxon>Bacteria</taxon>
        <taxon>Pseudomonadati</taxon>
        <taxon>Pseudomonadota</taxon>
        <taxon>Gammaproteobacteria</taxon>
        <taxon>Pseudomonadales</taxon>
        <taxon>Pseudomonadaceae</taxon>
        <taxon>Stutzerimonas</taxon>
    </lineage>
</organism>
<dbReference type="EC" id="2.7.7.59" evidence="1"/>
<dbReference type="EC" id="3.1.4.-" evidence="1"/>
<dbReference type="EMBL" id="CP000304">
    <property type="protein sequence ID" value="ABP79220.1"/>
    <property type="molecule type" value="Genomic_DNA"/>
</dbReference>
<dbReference type="RefSeq" id="WP_011912698.1">
    <property type="nucleotide sequence ID" value="NC_009434.1"/>
</dbReference>
<dbReference type="SMR" id="A4VJR9"/>
<dbReference type="KEGG" id="psa:PST_1535"/>
<dbReference type="eggNOG" id="COG2844">
    <property type="taxonomic scope" value="Bacteria"/>
</dbReference>
<dbReference type="HOGENOM" id="CLU_012833_0_0_6"/>
<dbReference type="Proteomes" id="UP000000233">
    <property type="component" value="Chromosome"/>
</dbReference>
<dbReference type="GO" id="GO:0008773">
    <property type="term" value="F:[protein-PII] uridylyltransferase activity"/>
    <property type="evidence" value="ECO:0007669"/>
    <property type="project" value="UniProtKB-UniRule"/>
</dbReference>
<dbReference type="GO" id="GO:0008081">
    <property type="term" value="F:phosphoric diester hydrolase activity"/>
    <property type="evidence" value="ECO:0007669"/>
    <property type="project" value="UniProtKB-UniRule"/>
</dbReference>
<dbReference type="GO" id="GO:0009399">
    <property type="term" value="P:nitrogen fixation"/>
    <property type="evidence" value="ECO:0007669"/>
    <property type="project" value="UniProtKB-UniRule"/>
</dbReference>
<dbReference type="GO" id="GO:0006808">
    <property type="term" value="P:regulation of nitrogen utilization"/>
    <property type="evidence" value="ECO:0007669"/>
    <property type="project" value="UniProtKB-UniRule"/>
</dbReference>
<dbReference type="CDD" id="cd04899">
    <property type="entry name" value="ACT_ACR-UUR-like_2"/>
    <property type="match status" value="1"/>
</dbReference>
<dbReference type="CDD" id="cd04900">
    <property type="entry name" value="ACT_UUR-like_1"/>
    <property type="match status" value="1"/>
</dbReference>
<dbReference type="CDD" id="cd00077">
    <property type="entry name" value="HDc"/>
    <property type="match status" value="1"/>
</dbReference>
<dbReference type="CDD" id="cd05401">
    <property type="entry name" value="NT_GlnE_GlnD_like"/>
    <property type="match status" value="1"/>
</dbReference>
<dbReference type="FunFam" id="1.10.3090.10:FF:000005">
    <property type="entry name" value="Bifunctional uridylyltransferase/uridylyl-removing enzyme"/>
    <property type="match status" value="1"/>
</dbReference>
<dbReference type="Gene3D" id="3.30.460.10">
    <property type="entry name" value="Beta Polymerase, domain 2"/>
    <property type="match status" value="1"/>
</dbReference>
<dbReference type="Gene3D" id="1.10.3090.10">
    <property type="entry name" value="cca-adding enzyme, domain 2"/>
    <property type="match status" value="1"/>
</dbReference>
<dbReference type="Gene3D" id="1.20.120.330">
    <property type="entry name" value="Nucleotidyltransferases domain 2"/>
    <property type="match status" value="1"/>
</dbReference>
<dbReference type="HAMAP" id="MF_00277">
    <property type="entry name" value="PII_uridylyl_transf"/>
    <property type="match status" value="1"/>
</dbReference>
<dbReference type="InterPro" id="IPR045865">
    <property type="entry name" value="ACT-like_dom_sf"/>
</dbReference>
<dbReference type="InterPro" id="IPR002912">
    <property type="entry name" value="ACT_dom"/>
</dbReference>
<dbReference type="InterPro" id="IPR003607">
    <property type="entry name" value="HD/PDEase_dom"/>
</dbReference>
<dbReference type="InterPro" id="IPR006674">
    <property type="entry name" value="HD_domain"/>
</dbReference>
<dbReference type="InterPro" id="IPR043519">
    <property type="entry name" value="NT_sf"/>
</dbReference>
<dbReference type="InterPro" id="IPR013546">
    <property type="entry name" value="PII_UdlTrfase/GS_AdlTrfase"/>
</dbReference>
<dbReference type="InterPro" id="IPR002934">
    <property type="entry name" value="Polymerase_NTP_transf_dom"/>
</dbReference>
<dbReference type="InterPro" id="IPR010043">
    <property type="entry name" value="UTase/UR"/>
</dbReference>
<dbReference type="NCBIfam" id="NF001366">
    <property type="entry name" value="PRK00275.1"/>
    <property type="match status" value="1"/>
</dbReference>
<dbReference type="NCBIfam" id="TIGR01693">
    <property type="entry name" value="UTase_glnD"/>
    <property type="match status" value="1"/>
</dbReference>
<dbReference type="PANTHER" id="PTHR47320">
    <property type="entry name" value="BIFUNCTIONAL URIDYLYLTRANSFERASE/URIDYLYL-REMOVING ENZYME"/>
    <property type="match status" value="1"/>
</dbReference>
<dbReference type="PANTHER" id="PTHR47320:SF1">
    <property type="entry name" value="BIFUNCTIONAL URIDYLYLTRANSFERASE_URIDYLYL-REMOVING ENZYME"/>
    <property type="match status" value="1"/>
</dbReference>
<dbReference type="Pfam" id="PF01842">
    <property type="entry name" value="ACT"/>
    <property type="match status" value="1"/>
</dbReference>
<dbReference type="Pfam" id="PF08335">
    <property type="entry name" value="GlnD_UR_UTase"/>
    <property type="match status" value="1"/>
</dbReference>
<dbReference type="Pfam" id="PF01966">
    <property type="entry name" value="HD"/>
    <property type="match status" value="1"/>
</dbReference>
<dbReference type="Pfam" id="PF01909">
    <property type="entry name" value="NTP_transf_2"/>
    <property type="match status" value="1"/>
</dbReference>
<dbReference type="PIRSF" id="PIRSF006288">
    <property type="entry name" value="PII_uridyltransf"/>
    <property type="match status" value="1"/>
</dbReference>
<dbReference type="SMART" id="SM00471">
    <property type="entry name" value="HDc"/>
    <property type="match status" value="1"/>
</dbReference>
<dbReference type="SUPFAM" id="SSF55021">
    <property type="entry name" value="ACT-like"/>
    <property type="match status" value="1"/>
</dbReference>
<dbReference type="SUPFAM" id="SSF109604">
    <property type="entry name" value="HD-domain/PDEase-like"/>
    <property type="match status" value="1"/>
</dbReference>
<dbReference type="SUPFAM" id="SSF81301">
    <property type="entry name" value="Nucleotidyltransferase"/>
    <property type="match status" value="1"/>
</dbReference>
<dbReference type="SUPFAM" id="SSF81593">
    <property type="entry name" value="Nucleotidyltransferase substrate binding subunit/domain"/>
    <property type="match status" value="1"/>
</dbReference>
<dbReference type="PROSITE" id="PS51671">
    <property type="entry name" value="ACT"/>
    <property type="match status" value="2"/>
</dbReference>
<dbReference type="PROSITE" id="PS51831">
    <property type="entry name" value="HD"/>
    <property type="match status" value="1"/>
</dbReference>
<sequence length="900" mass="102974">MPQVDPELFDRSQFQAELALKASPIAAYKKAIRQARQVLDERFRAGRDIRRLIEDRAWFVDQILRSAWSRFDWDKGADIALVAVGGYGRGELHPYSDIDLLILLDENDQEIFREPIEGFLTLLWDIGLEVGQAVRSVAECADEARADLTVITNLMESRTIAGPERLRQAMLQVTSTQQMWPSKEFFLAKRNEQRARHAKYNNTEYNLEPNVKGSPGGLRDIQTILWIARREFGTLNLQAMVDQGFITEGEHSLLTAAQEFLWKVRYGLHMLAGRAEDRLLFDHQRSLAALLGYEDSDAKLAIERFMQKYYRVVMSIAELSDLVGQHFAEVILWEGESGPIVPLNSRFQVRDGYLEVSNPAIFKRTPFAILETFVLLAQHPDIQGVRSDTIRLLRDHRYLIDDTFRQDLRNTSLFIELFKCKEGIHRNLRRMNRYGILGRYLPEFGHIVGQMQHDLFHIYTVDAHTLNVIKYLRKLTKPGVAEKYPLASKLVEKLPKPELIYIAGLYHDIAKGRGGDHSELGAVDAEQFCRRHKLPAWDTRLVVWLVENHLVMSTTAQRKDLSDPQVINDFAQRVGDETHLDYLYVLTVADINATNPTLWNSWRASLLRQLYTETKRALKRGLENPLGREEQIRQTQRAALDDLVRHGTDPDDAEQLWAQLGDDYFLRHTATDVAWHTDAIIEHPANGGPLVLIKETTQREFEGGTQIFIYAPDQHDFFAVTVAAMDQLNLNIHDARILTSSSQFTLDTYIVLEADGSPIGNNPERIEEIRSGLIAALRNPDDYLTIIQRRVPRQLKHFAFPPQVTIHNDTQRPQTILEIIAPDRPGLLARVGQLFLDFDLSVQNAKIATLGERVEDVFFVTDADNQPLSDPQLCLRLQQAIIKELQQENEQQPSPSSIVI</sequence>